<reference key="1">
    <citation type="journal article" date="2000" name="Nature">
        <title>The genome sequence of the plant pathogen Xylella fastidiosa.</title>
        <authorList>
            <person name="Simpson A.J.G."/>
            <person name="Reinach F.C."/>
            <person name="Arruda P."/>
            <person name="Abreu F.A."/>
            <person name="Acencio M."/>
            <person name="Alvarenga R."/>
            <person name="Alves L.M.C."/>
            <person name="Araya J.E."/>
            <person name="Baia G.S."/>
            <person name="Baptista C.S."/>
            <person name="Barros M.H."/>
            <person name="Bonaccorsi E.D."/>
            <person name="Bordin S."/>
            <person name="Bove J.M."/>
            <person name="Briones M.R.S."/>
            <person name="Bueno M.R.P."/>
            <person name="Camargo A.A."/>
            <person name="Camargo L.E.A."/>
            <person name="Carraro D.M."/>
            <person name="Carrer H."/>
            <person name="Colauto N.B."/>
            <person name="Colombo C."/>
            <person name="Costa F.F."/>
            <person name="Costa M.C.R."/>
            <person name="Costa-Neto C.M."/>
            <person name="Coutinho L.L."/>
            <person name="Cristofani M."/>
            <person name="Dias-Neto E."/>
            <person name="Docena C."/>
            <person name="El-Dorry H."/>
            <person name="Facincani A.P."/>
            <person name="Ferreira A.J.S."/>
            <person name="Ferreira V.C.A."/>
            <person name="Ferro J.A."/>
            <person name="Fraga J.S."/>
            <person name="Franca S.C."/>
            <person name="Franco M.C."/>
            <person name="Frohme M."/>
            <person name="Furlan L.R."/>
            <person name="Garnier M."/>
            <person name="Goldman G.H."/>
            <person name="Goldman M.H.S."/>
            <person name="Gomes S.L."/>
            <person name="Gruber A."/>
            <person name="Ho P.L."/>
            <person name="Hoheisel J.D."/>
            <person name="Junqueira M.L."/>
            <person name="Kemper E.L."/>
            <person name="Kitajima J.P."/>
            <person name="Krieger J.E."/>
            <person name="Kuramae E.E."/>
            <person name="Laigret F."/>
            <person name="Lambais M.R."/>
            <person name="Leite L.C.C."/>
            <person name="Lemos E.G.M."/>
            <person name="Lemos M.V.F."/>
            <person name="Lopes S.A."/>
            <person name="Lopes C.R."/>
            <person name="Machado J.A."/>
            <person name="Machado M.A."/>
            <person name="Madeira A.M.B.N."/>
            <person name="Madeira H.M.F."/>
            <person name="Marino C.L."/>
            <person name="Marques M.V."/>
            <person name="Martins E.A.L."/>
            <person name="Martins E.M.F."/>
            <person name="Matsukuma A.Y."/>
            <person name="Menck C.F.M."/>
            <person name="Miracca E.C."/>
            <person name="Miyaki C.Y."/>
            <person name="Monteiro-Vitorello C.B."/>
            <person name="Moon D.H."/>
            <person name="Nagai M.A."/>
            <person name="Nascimento A.L.T.O."/>
            <person name="Netto L.E.S."/>
            <person name="Nhani A. Jr."/>
            <person name="Nobrega F.G."/>
            <person name="Nunes L.R."/>
            <person name="Oliveira M.A."/>
            <person name="de Oliveira M.C."/>
            <person name="de Oliveira R.C."/>
            <person name="Palmieri D.A."/>
            <person name="Paris A."/>
            <person name="Peixoto B.R."/>
            <person name="Pereira G.A.G."/>
            <person name="Pereira H.A. Jr."/>
            <person name="Pesquero J.B."/>
            <person name="Quaggio R.B."/>
            <person name="Roberto P.G."/>
            <person name="Rodrigues V."/>
            <person name="de Rosa A.J.M."/>
            <person name="de Rosa V.E. Jr."/>
            <person name="de Sa R.G."/>
            <person name="Santelli R.V."/>
            <person name="Sawasaki H.E."/>
            <person name="da Silva A.C.R."/>
            <person name="da Silva A.M."/>
            <person name="da Silva F.R."/>
            <person name="Silva W.A. Jr."/>
            <person name="da Silveira J.F."/>
            <person name="Silvestri M.L.Z."/>
            <person name="Siqueira W.J."/>
            <person name="de Souza A.A."/>
            <person name="de Souza A.P."/>
            <person name="Terenzi M.F."/>
            <person name="Truffi D."/>
            <person name="Tsai S.M."/>
            <person name="Tsuhako M.H."/>
            <person name="Vallada H."/>
            <person name="Van Sluys M.A."/>
            <person name="Verjovski-Almeida S."/>
            <person name="Vettore A.L."/>
            <person name="Zago M.A."/>
            <person name="Zatz M."/>
            <person name="Meidanis J."/>
            <person name="Setubal J.C."/>
        </authorList>
    </citation>
    <scope>NUCLEOTIDE SEQUENCE [LARGE SCALE GENOMIC DNA]</scope>
    <source>
        <strain>9a5c</strain>
    </source>
</reference>
<sequence length="464" mass="50748">MTRYFSIVLSLLLAVSCVFLPVASARQQQHQPLDRIVAVVDDNVVLKSELDRAIHNVKSQYVGHEGQLPPDEVLQRQVLERLILIKLQVARAQTNGIRVSDDELNQAISSIAENNKTSVDGLRQKLVAEGISFPEFRQSVRDEITVHHLRQGFAQSRIVVSEGEVDTALAQASSGAQYHLQHILVAVPDGATSQQIAIAQKKIDGIKSVIDKGELAFSAAAVRYSDSPNALESGDLGWRSLDEIPEAFAQMVQTMKPGQIVGPLRGTSGFQLLKLVEVRDSAAAAAGPRQMATEYHARHILVRITEKQKEAEAKAKIDTLRARIAGGADFQTVARESSEDANNSNQGGDLGWFPSDAFGADFGNHVKALADGNVSEPFRSAAGWHIVQRLGTRQTDVTRENQRAQIRDTIGQRKLEESYERFLRELRSEAYVSLQIEEPADDHQTPSAAVIPATGAVLPSATKH</sequence>
<name>SURA_XYLFA</name>
<organism>
    <name type="scientific">Xylella fastidiosa (strain 9a5c)</name>
    <dbReference type="NCBI Taxonomy" id="160492"/>
    <lineage>
        <taxon>Bacteria</taxon>
        <taxon>Pseudomonadati</taxon>
        <taxon>Pseudomonadota</taxon>
        <taxon>Gammaproteobacteria</taxon>
        <taxon>Lysobacterales</taxon>
        <taxon>Lysobacteraceae</taxon>
        <taxon>Xylella</taxon>
    </lineage>
</organism>
<comment type="function">
    <text evidence="1">Chaperone involved in the correct folding and assembly of outer membrane proteins. Recognizes specific patterns of aromatic residues and the orientation of their side chains, which are found more frequently in integral outer membrane proteins. May act in both early periplasmic and late outer membrane-associated steps of protein maturation.</text>
</comment>
<comment type="catalytic activity">
    <reaction evidence="1">
        <text>[protein]-peptidylproline (omega=180) = [protein]-peptidylproline (omega=0)</text>
        <dbReference type="Rhea" id="RHEA:16237"/>
        <dbReference type="Rhea" id="RHEA-COMP:10747"/>
        <dbReference type="Rhea" id="RHEA-COMP:10748"/>
        <dbReference type="ChEBI" id="CHEBI:83833"/>
        <dbReference type="ChEBI" id="CHEBI:83834"/>
        <dbReference type="EC" id="5.2.1.8"/>
    </reaction>
</comment>
<comment type="subcellular location">
    <subcellularLocation>
        <location evidence="1">Periplasm</location>
    </subcellularLocation>
    <text evidence="1">Is capable of associating with the outer membrane.</text>
</comment>
<comment type="domain">
    <text evidence="1">The PPIase activity resides only in the second parvulin domain. The N-terminal region and the C-terminal tail are necessary and sufficient for the chaperone activity of SurA. The PPIase activity is dispensable for SurA to function as a chaperone. The N-terminal region and the C-terminal tail are also required for porin recognition.</text>
</comment>
<proteinExistence type="inferred from homology"/>
<feature type="signal peptide" evidence="1">
    <location>
        <begin position="1"/>
        <end position="25"/>
    </location>
</feature>
<feature type="chain" id="PRO_0000270053" description="Chaperone SurA">
    <location>
        <begin position="26"/>
        <end position="464"/>
    </location>
</feature>
<feature type="domain" description="PpiC 1" evidence="1">
    <location>
        <begin position="175"/>
        <end position="277"/>
    </location>
</feature>
<feature type="domain" description="PpiC 2" evidence="1">
    <location>
        <begin position="292"/>
        <end position="391"/>
    </location>
</feature>
<feature type="region of interest" description="Disordered" evidence="2">
    <location>
        <begin position="439"/>
        <end position="464"/>
    </location>
</feature>
<protein>
    <recommendedName>
        <fullName evidence="1">Chaperone SurA</fullName>
    </recommendedName>
    <alternativeName>
        <fullName evidence="1">Peptidyl-prolyl cis-trans isomerase SurA</fullName>
        <shortName evidence="1">PPIase SurA</shortName>
        <ecNumber evidence="1">5.2.1.8</ecNumber>
    </alternativeName>
    <alternativeName>
        <fullName evidence="1">Rotamase SurA</fullName>
    </alternativeName>
</protein>
<gene>
    <name evidence="1" type="primary">surA</name>
    <name type="ordered locus">XF_0838</name>
</gene>
<evidence type="ECO:0000255" key="1">
    <source>
        <dbReference type="HAMAP-Rule" id="MF_01183"/>
    </source>
</evidence>
<evidence type="ECO:0000256" key="2">
    <source>
        <dbReference type="SAM" id="MobiDB-lite"/>
    </source>
</evidence>
<keyword id="KW-0143">Chaperone</keyword>
<keyword id="KW-0413">Isomerase</keyword>
<keyword id="KW-0574">Periplasm</keyword>
<keyword id="KW-0677">Repeat</keyword>
<keyword id="KW-0697">Rotamase</keyword>
<keyword id="KW-0732">Signal</keyword>
<dbReference type="EC" id="5.2.1.8" evidence="1"/>
<dbReference type="EMBL" id="AE003849">
    <property type="protein sequence ID" value="AAF83648.1"/>
    <property type="molecule type" value="Genomic_DNA"/>
</dbReference>
<dbReference type="PIR" id="C82756">
    <property type="entry name" value="C82756"/>
</dbReference>
<dbReference type="RefSeq" id="WP_010893358.1">
    <property type="nucleotide sequence ID" value="NC_002488.3"/>
</dbReference>
<dbReference type="SMR" id="Q9PF40"/>
<dbReference type="STRING" id="160492.XF_0838"/>
<dbReference type="KEGG" id="xfa:XF_0838"/>
<dbReference type="eggNOG" id="COG0760">
    <property type="taxonomic scope" value="Bacteria"/>
</dbReference>
<dbReference type="HOGENOM" id="CLU_034646_11_0_6"/>
<dbReference type="Proteomes" id="UP000000812">
    <property type="component" value="Chromosome"/>
</dbReference>
<dbReference type="GO" id="GO:0030288">
    <property type="term" value="C:outer membrane-bounded periplasmic space"/>
    <property type="evidence" value="ECO:0007669"/>
    <property type="project" value="InterPro"/>
</dbReference>
<dbReference type="GO" id="GO:0042277">
    <property type="term" value="F:peptide binding"/>
    <property type="evidence" value="ECO:0007669"/>
    <property type="project" value="InterPro"/>
</dbReference>
<dbReference type="GO" id="GO:0003755">
    <property type="term" value="F:peptidyl-prolyl cis-trans isomerase activity"/>
    <property type="evidence" value="ECO:0007669"/>
    <property type="project" value="UniProtKB-UniRule"/>
</dbReference>
<dbReference type="GO" id="GO:0051082">
    <property type="term" value="F:unfolded protein binding"/>
    <property type="evidence" value="ECO:0007669"/>
    <property type="project" value="UniProtKB-UniRule"/>
</dbReference>
<dbReference type="GO" id="GO:0043165">
    <property type="term" value="P:Gram-negative-bacterium-type cell outer membrane assembly"/>
    <property type="evidence" value="ECO:0007669"/>
    <property type="project" value="InterPro"/>
</dbReference>
<dbReference type="GO" id="GO:0006457">
    <property type="term" value="P:protein folding"/>
    <property type="evidence" value="ECO:0007669"/>
    <property type="project" value="UniProtKB-UniRule"/>
</dbReference>
<dbReference type="GO" id="GO:0050821">
    <property type="term" value="P:protein stabilization"/>
    <property type="evidence" value="ECO:0007669"/>
    <property type="project" value="InterPro"/>
</dbReference>
<dbReference type="Gene3D" id="3.10.50.40">
    <property type="match status" value="2"/>
</dbReference>
<dbReference type="Gene3D" id="1.10.4030.10">
    <property type="entry name" value="Porin chaperone SurA, peptide-binding domain"/>
    <property type="match status" value="1"/>
</dbReference>
<dbReference type="HAMAP" id="MF_01183">
    <property type="entry name" value="Chaperone_SurA"/>
    <property type="match status" value="1"/>
</dbReference>
<dbReference type="InterPro" id="IPR050280">
    <property type="entry name" value="OMP_Chaperone_SurA"/>
</dbReference>
<dbReference type="InterPro" id="IPR046357">
    <property type="entry name" value="PPIase_dom_sf"/>
</dbReference>
<dbReference type="InterPro" id="IPR000297">
    <property type="entry name" value="PPIase_PpiC"/>
</dbReference>
<dbReference type="InterPro" id="IPR023034">
    <property type="entry name" value="PPIase_SurA"/>
</dbReference>
<dbReference type="InterPro" id="IPR015391">
    <property type="entry name" value="SurA_N"/>
</dbReference>
<dbReference type="InterPro" id="IPR027304">
    <property type="entry name" value="Trigger_fact/SurA_dom_sf"/>
</dbReference>
<dbReference type="PANTHER" id="PTHR47637">
    <property type="entry name" value="CHAPERONE SURA"/>
    <property type="match status" value="1"/>
</dbReference>
<dbReference type="PANTHER" id="PTHR47637:SF1">
    <property type="entry name" value="CHAPERONE SURA"/>
    <property type="match status" value="1"/>
</dbReference>
<dbReference type="Pfam" id="PF00639">
    <property type="entry name" value="Rotamase"/>
    <property type="match status" value="1"/>
</dbReference>
<dbReference type="Pfam" id="PF13616">
    <property type="entry name" value="Rotamase_3"/>
    <property type="match status" value="1"/>
</dbReference>
<dbReference type="Pfam" id="PF09312">
    <property type="entry name" value="SurA_N"/>
    <property type="match status" value="1"/>
</dbReference>
<dbReference type="SUPFAM" id="SSF54534">
    <property type="entry name" value="FKBP-like"/>
    <property type="match status" value="2"/>
</dbReference>
<dbReference type="SUPFAM" id="SSF109998">
    <property type="entry name" value="Triger factor/SurA peptide-binding domain-like"/>
    <property type="match status" value="1"/>
</dbReference>
<dbReference type="PROSITE" id="PS50198">
    <property type="entry name" value="PPIC_PPIASE_2"/>
    <property type="match status" value="2"/>
</dbReference>
<accession>Q9PF40</accession>